<reference key="1">
    <citation type="journal article" date="2000" name="DNA Res.">
        <title>Complete structure of the chloroplast genome of a legume, Lotus japonicus.</title>
        <authorList>
            <person name="Kato T."/>
            <person name="Kaneko T."/>
            <person name="Sato S."/>
            <person name="Nakamura Y."/>
            <person name="Tabata S."/>
        </authorList>
    </citation>
    <scope>NUCLEOTIDE SEQUENCE [LARGE SCALE GENOMIC DNA]</scope>
    <source>
        <strain>cv. Miyakojima MG-20</strain>
    </source>
</reference>
<dbReference type="EC" id="3.4.21.92" evidence="1"/>
<dbReference type="EMBL" id="AP002983">
    <property type="protein sequence ID" value="BAB33221.1"/>
    <property type="molecule type" value="Genomic_DNA"/>
</dbReference>
<dbReference type="RefSeq" id="NP_084822.1">
    <property type="nucleotide sequence ID" value="NC_002694.1"/>
</dbReference>
<dbReference type="SMR" id="Q9BBQ9"/>
<dbReference type="MEROPS" id="S14.002"/>
<dbReference type="GeneID" id="802884"/>
<dbReference type="GO" id="GO:0009570">
    <property type="term" value="C:chloroplast stroma"/>
    <property type="evidence" value="ECO:0007669"/>
    <property type="project" value="UniProtKB-SubCell"/>
</dbReference>
<dbReference type="GO" id="GO:0009368">
    <property type="term" value="C:endopeptidase Clp complex"/>
    <property type="evidence" value="ECO:0007669"/>
    <property type="project" value="TreeGrafter"/>
</dbReference>
<dbReference type="GO" id="GO:0004176">
    <property type="term" value="F:ATP-dependent peptidase activity"/>
    <property type="evidence" value="ECO:0007669"/>
    <property type="project" value="InterPro"/>
</dbReference>
<dbReference type="GO" id="GO:0051117">
    <property type="term" value="F:ATPase binding"/>
    <property type="evidence" value="ECO:0007669"/>
    <property type="project" value="TreeGrafter"/>
</dbReference>
<dbReference type="GO" id="GO:0004252">
    <property type="term" value="F:serine-type endopeptidase activity"/>
    <property type="evidence" value="ECO:0007669"/>
    <property type="project" value="UniProtKB-UniRule"/>
</dbReference>
<dbReference type="GO" id="GO:0006515">
    <property type="term" value="P:protein quality control for misfolded or incompletely synthesized proteins"/>
    <property type="evidence" value="ECO:0007669"/>
    <property type="project" value="TreeGrafter"/>
</dbReference>
<dbReference type="CDD" id="cd07017">
    <property type="entry name" value="S14_ClpP_2"/>
    <property type="match status" value="1"/>
</dbReference>
<dbReference type="FunFam" id="3.90.226.10:FF:000006">
    <property type="entry name" value="ATP-dependent Clp protease proteolytic subunit"/>
    <property type="match status" value="1"/>
</dbReference>
<dbReference type="Gene3D" id="3.90.226.10">
    <property type="entry name" value="2-enoyl-CoA Hydratase, Chain A, domain 1"/>
    <property type="match status" value="1"/>
</dbReference>
<dbReference type="HAMAP" id="MF_00444">
    <property type="entry name" value="ClpP"/>
    <property type="match status" value="1"/>
</dbReference>
<dbReference type="InterPro" id="IPR001907">
    <property type="entry name" value="ClpP"/>
</dbReference>
<dbReference type="InterPro" id="IPR029045">
    <property type="entry name" value="ClpP/crotonase-like_dom_sf"/>
</dbReference>
<dbReference type="InterPro" id="IPR023562">
    <property type="entry name" value="ClpP/TepA"/>
</dbReference>
<dbReference type="InterPro" id="IPR033135">
    <property type="entry name" value="ClpP_His_AS"/>
</dbReference>
<dbReference type="InterPro" id="IPR018215">
    <property type="entry name" value="ClpP_Ser_AS"/>
</dbReference>
<dbReference type="PANTHER" id="PTHR10381">
    <property type="entry name" value="ATP-DEPENDENT CLP PROTEASE PROTEOLYTIC SUBUNIT"/>
    <property type="match status" value="1"/>
</dbReference>
<dbReference type="PANTHER" id="PTHR10381:SF15">
    <property type="entry name" value="CHLOROPLASTIC ATP-DEPENDENT CLP PROTEASE PROTEOLYTIC SUBUNIT 1"/>
    <property type="match status" value="1"/>
</dbReference>
<dbReference type="Pfam" id="PF00574">
    <property type="entry name" value="CLP_protease"/>
    <property type="match status" value="1"/>
</dbReference>
<dbReference type="PRINTS" id="PR00127">
    <property type="entry name" value="CLPPROTEASEP"/>
</dbReference>
<dbReference type="SUPFAM" id="SSF52096">
    <property type="entry name" value="ClpP/crotonase"/>
    <property type="match status" value="1"/>
</dbReference>
<dbReference type="PROSITE" id="PS00382">
    <property type="entry name" value="CLP_PROTEASE_HIS"/>
    <property type="match status" value="1"/>
</dbReference>
<dbReference type="PROSITE" id="PS00381">
    <property type="entry name" value="CLP_PROTEASE_SER"/>
    <property type="match status" value="1"/>
</dbReference>
<evidence type="ECO:0000255" key="1">
    <source>
        <dbReference type="HAMAP-Rule" id="MF_00444"/>
    </source>
</evidence>
<gene>
    <name evidence="1" type="primary">clpP</name>
</gene>
<name>CLPP_LOTJA</name>
<organism>
    <name type="scientific">Lotus japonicus</name>
    <name type="common">Lotus corniculatus var. japonicus</name>
    <dbReference type="NCBI Taxonomy" id="34305"/>
    <lineage>
        <taxon>Eukaryota</taxon>
        <taxon>Viridiplantae</taxon>
        <taxon>Streptophyta</taxon>
        <taxon>Embryophyta</taxon>
        <taxon>Tracheophyta</taxon>
        <taxon>Spermatophyta</taxon>
        <taxon>Magnoliopsida</taxon>
        <taxon>eudicotyledons</taxon>
        <taxon>Gunneridae</taxon>
        <taxon>Pentapetalae</taxon>
        <taxon>rosids</taxon>
        <taxon>fabids</taxon>
        <taxon>Fabales</taxon>
        <taxon>Fabaceae</taxon>
        <taxon>Papilionoideae</taxon>
        <taxon>50 kb inversion clade</taxon>
        <taxon>NPAAA clade</taxon>
        <taxon>Hologalegina</taxon>
        <taxon>robinioid clade</taxon>
        <taxon>Loteae</taxon>
        <taxon>Lotus</taxon>
    </lineage>
</organism>
<proteinExistence type="inferred from homology"/>
<comment type="function">
    <text evidence="1">Cleaves peptides in various proteins in a process that requires ATP hydrolysis. Has a chymotrypsin-like activity. Plays a major role in the degradation of misfolded proteins.</text>
</comment>
<comment type="catalytic activity">
    <reaction evidence="1">
        <text>Hydrolysis of proteins to small peptides in the presence of ATP and magnesium. alpha-casein is the usual test substrate. In the absence of ATP, only oligopeptides shorter than five residues are hydrolyzed (such as succinyl-Leu-Tyr-|-NHMec, and Leu-Tyr-Leu-|-Tyr-Trp, in which cleavage of the -Tyr-|-Leu- and -Tyr-|-Trp bonds also occurs).</text>
        <dbReference type="EC" id="3.4.21.92"/>
    </reaction>
</comment>
<comment type="subunit">
    <text>Component of the chloroplastic Clp protease core complex.</text>
</comment>
<comment type="subcellular location">
    <subcellularLocation>
        <location evidence="1">Plastid</location>
        <location evidence="1">Chloroplast stroma</location>
    </subcellularLocation>
</comment>
<comment type="similarity">
    <text evidence="1">Belongs to the peptidase S14 family.</text>
</comment>
<geneLocation type="chloroplast"/>
<sequence length="196" mass="22026">MPIGVPKVPFRSPGEEDASWVDIYNRLYRERLLFLGQEVNSEISNQLIGLMVYLSIEDDKKDLYLFINSPGGWVIPGIAIYDTMQFVQPDVQTVCMGLAASMGSFVLAGGKITKRLAFPHARVMIHQPASSFYEAQTGEFILEAEELLKLRETITRVYVQRTGKPLWLVSEDMERDVFMSAAEAQAYGIVDLVAVE</sequence>
<protein>
    <recommendedName>
        <fullName evidence="1">ATP-dependent Clp protease proteolytic subunit</fullName>
        <ecNumber evidence="1">3.4.21.92</ecNumber>
    </recommendedName>
    <alternativeName>
        <fullName evidence="1">Endopeptidase Clp</fullName>
    </alternativeName>
</protein>
<accession>Q9BBQ9</accession>
<feature type="chain" id="PRO_0000179742" description="ATP-dependent Clp protease proteolytic subunit">
    <location>
        <begin position="1"/>
        <end position="196"/>
    </location>
</feature>
<feature type="active site" description="Nucleophile" evidence="1">
    <location>
        <position position="101"/>
    </location>
</feature>
<feature type="active site" evidence="1">
    <location>
        <position position="126"/>
    </location>
</feature>
<keyword id="KW-0150">Chloroplast</keyword>
<keyword id="KW-0378">Hydrolase</keyword>
<keyword id="KW-0934">Plastid</keyword>
<keyword id="KW-0645">Protease</keyword>
<keyword id="KW-0720">Serine protease</keyword>